<gene>
    <name evidence="1" type="primary">aroB</name>
    <name type="ordered locus">GK2206</name>
</gene>
<comment type="function">
    <text evidence="1">Catalyzes the conversion of 3-deoxy-D-arabino-heptulosonate 7-phosphate (DAHP) to dehydroquinate (DHQ).</text>
</comment>
<comment type="catalytic activity">
    <reaction evidence="1">
        <text>7-phospho-2-dehydro-3-deoxy-D-arabino-heptonate = 3-dehydroquinate + phosphate</text>
        <dbReference type="Rhea" id="RHEA:21968"/>
        <dbReference type="ChEBI" id="CHEBI:32364"/>
        <dbReference type="ChEBI" id="CHEBI:43474"/>
        <dbReference type="ChEBI" id="CHEBI:58394"/>
        <dbReference type="EC" id="4.2.3.4"/>
    </reaction>
</comment>
<comment type="cofactor">
    <cofactor evidence="1">
        <name>Co(2+)</name>
        <dbReference type="ChEBI" id="CHEBI:48828"/>
    </cofactor>
    <cofactor evidence="1">
        <name>Zn(2+)</name>
        <dbReference type="ChEBI" id="CHEBI:29105"/>
    </cofactor>
    <text evidence="1">Binds 1 divalent metal cation per subunit. Can use either Co(2+) or Zn(2+).</text>
</comment>
<comment type="cofactor">
    <cofactor evidence="1">
        <name>NAD(+)</name>
        <dbReference type="ChEBI" id="CHEBI:57540"/>
    </cofactor>
</comment>
<comment type="pathway">
    <text evidence="1">Metabolic intermediate biosynthesis; chorismate biosynthesis; chorismate from D-erythrose 4-phosphate and phosphoenolpyruvate: step 2/7.</text>
</comment>
<comment type="subcellular location">
    <subcellularLocation>
        <location evidence="1">Cytoplasm</location>
    </subcellularLocation>
</comment>
<comment type="similarity">
    <text evidence="1">Belongs to the sugar phosphate cyclases superfamily. Dehydroquinate synthase family.</text>
</comment>
<accession>Q5KXU5</accession>
<name>AROB_GEOKA</name>
<proteinExistence type="inferred from homology"/>
<dbReference type="EC" id="4.2.3.4" evidence="1"/>
<dbReference type="EMBL" id="BA000043">
    <property type="protein sequence ID" value="BAD76491.1"/>
    <property type="molecule type" value="Genomic_DNA"/>
</dbReference>
<dbReference type="RefSeq" id="WP_011231691.1">
    <property type="nucleotide sequence ID" value="NC_006510.1"/>
</dbReference>
<dbReference type="SMR" id="Q5KXU5"/>
<dbReference type="STRING" id="235909.GK2206"/>
<dbReference type="KEGG" id="gka:GK2206"/>
<dbReference type="PATRIC" id="fig|235909.7.peg.2361"/>
<dbReference type="eggNOG" id="COG0337">
    <property type="taxonomic scope" value="Bacteria"/>
</dbReference>
<dbReference type="HOGENOM" id="CLU_001201_0_2_9"/>
<dbReference type="UniPathway" id="UPA00053">
    <property type="reaction ID" value="UER00085"/>
</dbReference>
<dbReference type="Proteomes" id="UP000001172">
    <property type="component" value="Chromosome"/>
</dbReference>
<dbReference type="GO" id="GO:0005737">
    <property type="term" value="C:cytoplasm"/>
    <property type="evidence" value="ECO:0007669"/>
    <property type="project" value="UniProtKB-SubCell"/>
</dbReference>
<dbReference type="GO" id="GO:0003856">
    <property type="term" value="F:3-dehydroquinate synthase activity"/>
    <property type="evidence" value="ECO:0007669"/>
    <property type="project" value="UniProtKB-UniRule"/>
</dbReference>
<dbReference type="GO" id="GO:0046872">
    <property type="term" value="F:metal ion binding"/>
    <property type="evidence" value="ECO:0007669"/>
    <property type="project" value="UniProtKB-KW"/>
</dbReference>
<dbReference type="GO" id="GO:0000166">
    <property type="term" value="F:nucleotide binding"/>
    <property type="evidence" value="ECO:0007669"/>
    <property type="project" value="UniProtKB-KW"/>
</dbReference>
<dbReference type="GO" id="GO:0008652">
    <property type="term" value="P:amino acid biosynthetic process"/>
    <property type="evidence" value="ECO:0007669"/>
    <property type="project" value="UniProtKB-KW"/>
</dbReference>
<dbReference type="GO" id="GO:0009073">
    <property type="term" value="P:aromatic amino acid family biosynthetic process"/>
    <property type="evidence" value="ECO:0007669"/>
    <property type="project" value="UniProtKB-KW"/>
</dbReference>
<dbReference type="GO" id="GO:0009423">
    <property type="term" value="P:chorismate biosynthetic process"/>
    <property type="evidence" value="ECO:0007669"/>
    <property type="project" value="UniProtKB-UniRule"/>
</dbReference>
<dbReference type="CDD" id="cd08195">
    <property type="entry name" value="DHQS"/>
    <property type="match status" value="1"/>
</dbReference>
<dbReference type="FunFam" id="3.40.50.1970:FF:000001">
    <property type="entry name" value="3-dehydroquinate synthase"/>
    <property type="match status" value="1"/>
</dbReference>
<dbReference type="Gene3D" id="3.40.50.1970">
    <property type="match status" value="1"/>
</dbReference>
<dbReference type="Gene3D" id="1.20.1090.10">
    <property type="entry name" value="Dehydroquinate synthase-like - alpha domain"/>
    <property type="match status" value="1"/>
</dbReference>
<dbReference type="HAMAP" id="MF_00110">
    <property type="entry name" value="DHQ_synthase"/>
    <property type="match status" value="1"/>
</dbReference>
<dbReference type="InterPro" id="IPR050071">
    <property type="entry name" value="Dehydroquinate_synthase"/>
</dbReference>
<dbReference type="InterPro" id="IPR016037">
    <property type="entry name" value="DHQ_synth_AroB"/>
</dbReference>
<dbReference type="InterPro" id="IPR030963">
    <property type="entry name" value="DHQ_synth_fam"/>
</dbReference>
<dbReference type="InterPro" id="IPR030960">
    <property type="entry name" value="DHQS/DOIS_N"/>
</dbReference>
<dbReference type="InterPro" id="IPR056179">
    <property type="entry name" value="DHQS_C"/>
</dbReference>
<dbReference type="NCBIfam" id="TIGR01357">
    <property type="entry name" value="aroB"/>
    <property type="match status" value="1"/>
</dbReference>
<dbReference type="PANTHER" id="PTHR43622">
    <property type="entry name" value="3-DEHYDROQUINATE SYNTHASE"/>
    <property type="match status" value="1"/>
</dbReference>
<dbReference type="PANTHER" id="PTHR43622:SF7">
    <property type="entry name" value="3-DEHYDROQUINATE SYNTHASE, CHLOROPLASTIC"/>
    <property type="match status" value="1"/>
</dbReference>
<dbReference type="Pfam" id="PF01761">
    <property type="entry name" value="DHQ_synthase"/>
    <property type="match status" value="1"/>
</dbReference>
<dbReference type="Pfam" id="PF24621">
    <property type="entry name" value="DHQS_C"/>
    <property type="match status" value="1"/>
</dbReference>
<dbReference type="PIRSF" id="PIRSF001455">
    <property type="entry name" value="DHQ_synth"/>
    <property type="match status" value="1"/>
</dbReference>
<dbReference type="SUPFAM" id="SSF56796">
    <property type="entry name" value="Dehydroquinate synthase-like"/>
    <property type="match status" value="1"/>
</dbReference>
<organism>
    <name type="scientific">Geobacillus kaustophilus (strain HTA426)</name>
    <dbReference type="NCBI Taxonomy" id="235909"/>
    <lineage>
        <taxon>Bacteria</taxon>
        <taxon>Bacillati</taxon>
        <taxon>Bacillota</taxon>
        <taxon>Bacilli</taxon>
        <taxon>Bacillales</taxon>
        <taxon>Anoxybacillaceae</taxon>
        <taxon>Geobacillus</taxon>
        <taxon>Geobacillus thermoleovorans group</taxon>
    </lineage>
</organism>
<keyword id="KW-0028">Amino-acid biosynthesis</keyword>
<keyword id="KW-0057">Aromatic amino acid biosynthesis</keyword>
<keyword id="KW-0170">Cobalt</keyword>
<keyword id="KW-0963">Cytoplasm</keyword>
<keyword id="KW-0456">Lyase</keyword>
<keyword id="KW-0479">Metal-binding</keyword>
<keyword id="KW-0520">NAD</keyword>
<keyword id="KW-0547">Nucleotide-binding</keyword>
<keyword id="KW-1185">Reference proteome</keyword>
<keyword id="KW-0862">Zinc</keyword>
<reference key="1">
    <citation type="journal article" date="2004" name="Nucleic Acids Res.">
        <title>Thermoadaptation trait revealed by the genome sequence of thermophilic Geobacillus kaustophilus.</title>
        <authorList>
            <person name="Takami H."/>
            <person name="Takaki Y."/>
            <person name="Chee G.-J."/>
            <person name="Nishi S."/>
            <person name="Shimamura S."/>
            <person name="Suzuki H."/>
            <person name="Matsui S."/>
            <person name="Uchiyama I."/>
        </authorList>
    </citation>
    <scope>NUCLEOTIDE SEQUENCE [LARGE SCALE GENOMIC DNA]</scope>
    <source>
        <strain>HTA426</strain>
    </source>
</reference>
<feature type="chain" id="PRO_0000231088" description="3-dehydroquinate synthase">
    <location>
        <begin position="1"/>
        <end position="366"/>
    </location>
</feature>
<feature type="binding site" evidence="1">
    <location>
        <begin position="74"/>
        <end position="79"/>
    </location>
    <ligand>
        <name>NAD(+)</name>
        <dbReference type="ChEBI" id="CHEBI:57540"/>
    </ligand>
</feature>
<feature type="binding site" evidence="1">
    <location>
        <begin position="108"/>
        <end position="112"/>
    </location>
    <ligand>
        <name>NAD(+)</name>
        <dbReference type="ChEBI" id="CHEBI:57540"/>
    </ligand>
</feature>
<feature type="binding site" evidence="1">
    <location>
        <begin position="132"/>
        <end position="133"/>
    </location>
    <ligand>
        <name>NAD(+)</name>
        <dbReference type="ChEBI" id="CHEBI:57540"/>
    </ligand>
</feature>
<feature type="binding site" evidence="1">
    <location>
        <position position="144"/>
    </location>
    <ligand>
        <name>NAD(+)</name>
        <dbReference type="ChEBI" id="CHEBI:57540"/>
    </ligand>
</feature>
<feature type="binding site" evidence="1">
    <location>
        <position position="153"/>
    </location>
    <ligand>
        <name>NAD(+)</name>
        <dbReference type="ChEBI" id="CHEBI:57540"/>
    </ligand>
</feature>
<feature type="binding site" evidence="1">
    <location>
        <begin position="171"/>
        <end position="174"/>
    </location>
    <ligand>
        <name>NAD(+)</name>
        <dbReference type="ChEBI" id="CHEBI:57540"/>
    </ligand>
</feature>
<feature type="binding site" evidence="1">
    <location>
        <position position="186"/>
    </location>
    <ligand>
        <name>Zn(2+)</name>
        <dbReference type="ChEBI" id="CHEBI:29105"/>
    </ligand>
</feature>
<feature type="binding site" evidence="1">
    <location>
        <position position="249"/>
    </location>
    <ligand>
        <name>Zn(2+)</name>
        <dbReference type="ChEBI" id="CHEBI:29105"/>
    </ligand>
</feature>
<feature type="binding site" evidence="1">
    <location>
        <position position="266"/>
    </location>
    <ligand>
        <name>Zn(2+)</name>
        <dbReference type="ChEBI" id="CHEBI:29105"/>
    </ligand>
</feature>
<protein>
    <recommendedName>
        <fullName evidence="1">3-dehydroquinate synthase</fullName>
        <shortName evidence="1">DHQS</shortName>
        <ecNumber evidence="1">4.2.3.4</ecNumber>
    </recommendedName>
</protein>
<evidence type="ECO:0000255" key="1">
    <source>
        <dbReference type="HAMAP-Rule" id="MF_00110"/>
    </source>
</evidence>
<sequence>MIERTIETATKRYPLLLGDGAARVLPSLLRSLSCPPGTKLFIVTDDTVAPLYLDEVRALLAAAEYDVYAYVIPSGEAAKSFDHYYACQTAALQCGLDRRSVIIALGGGVVGDLAGFVAATYMRGIRYIQMPTTLLAHDSAVGGKVAINHPLGKNMIGAFHQPEAVVYDTSFLRTLPERELRSGFAEVIKHALIRDRRFYDWLRAEIKTLADLRGEKLAYCIEKGIDIKASVVREDEKETGVRAHLNFGHTLGHALESELGYGALTHGEAVAVGMLFAVFVSERFYGRSFAEHRLADWFAGYGFPVSLPTTVQTPRLLEKMKGDKKAYAGTVRMVLLCEIGDVEVVELEDDNLLTWLDEFARQGGKG</sequence>